<name>CHEB1_XANCP</name>
<comment type="function">
    <text evidence="1">Involved in chemotaxis. Part of a chemotaxis signal transduction system that modulates chemotaxis in response to various stimuli. Catalyzes the demethylation of specific methylglutamate residues introduced into the chemoreceptors (methyl-accepting chemotaxis proteins or MCP) by CheR. Also mediates the irreversible deamidation of specific glutamine residues to glutamic acid.</text>
</comment>
<comment type="catalytic activity">
    <reaction evidence="1">
        <text>[protein]-L-glutamate 5-O-methyl ester + H2O = L-glutamyl-[protein] + methanol + H(+)</text>
        <dbReference type="Rhea" id="RHEA:23236"/>
        <dbReference type="Rhea" id="RHEA-COMP:10208"/>
        <dbReference type="Rhea" id="RHEA-COMP:10311"/>
        <dbReference type="ChEBI" id="CHEBI:15377"/>
        <dbReference type="ChEBI" id="CHEBI:15378"/>
        <dbReference type="ChEBI" id="CHEBI:17790"/>
        <dbReference type="ChEBI" id="CHEBI:29973"/>
        <dbReference type="ChEBI" id="CHEBI:82795"/>
        <dbReference type="EC" id="3.1.1.61"/>
    </reaction>
</comment>
<comment type="catalytic activity">
    <reaction evidence="1">
        <text>L-glutaminyl-[protein] + H2O = L-glutamyl-[protein] + NH4(+)</text>
        <dbReference type="Rhea" id="RHEA:16441"/>
        <dbReference type="Rhea" id="RHEA-COMP:10207"/>
        <dbReference type="Rhea" id="RHEA-COMP:10208"/>
        <dbReference type="ChEBI" id="CHEBI:15377"/>
        <dbReference type="ChEBI" id="CHEBI:28938"/>
        <dbReference type="ChEBI" id="CHEBI:29973"/>
        <dbReference type="ChEBI" id="CHEBI:30011"/>
        <dbReference type="EC" id="3.5.1.44"/>
    </reaction>
</comment>
<comment type="subcellular location">
    <subcellularLocation>
        <location evidence="1">Cytoplasm</location>
    </subcellularLocation>
</comment>
<comment type="domain">
    <text evidence="1">Contains a C-terminal catalytic domain, and an N-terminal region which modulates catalytic activity.</text>
</comment>
<comment type="PTM">
    <text evidence="1">Phosphorylated by CheA. Phosphorylation of the N-terminal regulatory domain activates the methylesterase activity.</text>
</comment>
<comment type="similarity">
    <text evidence="1">Belongs to the CheB family.</text>
</comment>
<dbReference type="EC" id="3.1.1.61" evidence="1"/>
<dbReference type="EC" id="3.5.1.44" evidence="1"/>
<dbReference type="EMBL" id="AE008922">
    <property type="protein sequence ID" value="AAM41155.1"/>
    <property type="molecule type" value="Genomic_DNA"/>
</dbReference>
<dbReference type="RefSeq" id="NP_637231.1">
    <property type="nucleotide sequence ID" value="NC_003902.1"/>
</dbReference>
<dbReference type="RefSeq" id="WP_011037036.1">
    <property type="nucleotide sequence ID" value="NC_003902.1"/>
</dbReference>
<dbReference type="SMR" id="Q8P9J7"/>
<dbReference type="STRING" id="190485.XCC1866"/>
<dbReference type="EnsemblBacteria" id="AAM41155">
    <property type="protein sequence ID" value="AAM41155"/>
    <property type="gene ID" value="XCC1866"/>
</dbReference>
<dbReference type="KEGG" id="xcc:XCC1866"/>
<dbReference type="PATRIC" id="fig|190485.4.peg.1991"/>
<dbReference type="eggNOG" id="COG2201">
    <property type="taxonomic scope" value="Bacteria"/>
</dbReference>
<dbReference type="HOGENOM" id="CLU_000445_51_0_6"/>
<dbReference type="OrthoDB" id="9793421at2"/>
<dbReference type="Proteomes" id="UP000001010">
    <property type="component" value="Chromosome"/>
</dbReference>
<dbReference type="GO" id="GO:0005737">
    <property type="term" value="C:cytoplasm"/>
    <property type="evidence" value="ECO:0007669"/>
    <property type="project" value="UniProtKB-SubCell"/>
</dbReference>
<dbReference type="GO" id="GO:0000156">
    <property type="term" value="F:phosphorelay response regulator activity"/>
    <property type="evidence" value="ECO:0007669"/>
    <property type="project" value="InterPro"/>
</dbReference>
<dbReference type="GO" id="GO:0008984">
    <property type="term" value="F:protein-glutamate methylesterase activity"/>
    <property type="evidence" value="ECO:0007669"/>
    <property type="project" value="UniProtKB-UniRule"/>
</dbReference>
<dbReference type="GO" id="GO:0050568">
    <property type="term" value="F:protein-glutamine glutaminase activity"/>
    <property type="evidence" value="ECO:0007669"/>
    <property type="project" value="UniProtKB-UniRule"/>
</dbReference>
<dbReference type="GO" id="GO:0006935">
    <property type="term" value="P:chemotaxis"/>
    <property type="evidence" value="ECO:0007669"/>
    <property type="project" value="UniProtKB-UniRule"/>
</dbReference>
<dbReference type="CDD" id="cd16432">
    <property type="entry name" value="CheB_Rec"/>
    <property type="match status" value="1"/>
</dbReference>
<dbReference type="CDD" id="cd17541">
    <property type="entry name" value="REC_CheB-like"/>
    <property type="match status" value="1"/>
</dbReference>
<dbReference type="Gene3D" id="3.40.50.2300">
    <property type="match status" value="1"/>
</dbReference>
<dbReference type="Gene3D" id="3.40.50.180">
    <property type="entry name" value="Methylesterase CheB, C-terminal domain"/>
    <property type="match status" value="1"/>
</dbReference>
<dbReference type="HAMAP" id="MF_00099">
    <property type="entry name" value="CheB_chemtxs"/>
    <property type="match status" value="1"/>
</dbReference>
<dbReference type="InterPro" id="IPR008248">
    <property type="entry name" value="CheB-like"/>
</dbReference>
<dbReference type="InterPro" id="IPR035909">
    <property type="entry name" value="CheB_C"/>
</dbReference>
<dbReference type="InterPro" id="IPR011006">
    <property type="entry name" value="CheY-like_superfamily"/>
</dbReference>
<dbReference type="InterPro" id="IPR000673">
    <property type="entry name" value="Sig_transdc_resp-reg_Me-estase"/>
</dbReference>
<dbReference type="InterPro" id="IPR001789">
    <property type="entry name" value="Sig_transdc_resp-reg_receiver"/>
</dbReference>
<dbReference type="NCBIfam" id="NF001965">
    <property type="entry name" value="PRK00742.1"/>
    <property type="match status" value="1"/>
</dbReference>
<dbReference type="NCBIfam" id="NF009206">
    <property type="entry name" value="PRK12555.1"/>
    <property type="match status" value="1"/>
</dbReference>
<dbReference type="PANTHER" id="PTHR42872">
    <property type="entry name" value="PROTEIN-GLUTAMATE METHYLESTERASE/PROTEIN-GLUTAMINE GLUTAMINASE"/>
    <property type="match status" value="1"/>
</dbReference>
<dbReference type="PANTHER" id="PTHR42872:SF6">
    <property type="entry name" value="PROTEIN-GLUTAMATE METHYLESTERASE_PROTEIN-GLUTAMINE GLUTAMINASE"/>
    <property type="match status" value="1"/>
</dbReference>
<dbReference type="Pfam" id="PF01339">
    <property type="entry name" value="CheB_methylest"/>
    <property type="match status" value="1"/>
</dbReference>
<dbReference type="Pfam" id="PF00072">
    <property type="entry name" value="Response_reg"/>
    <property type="match status" value="1"/>
</dbReference>
<dbReference type="PIRSF" id="PIRSF000876">
    <property type="entry name" value="RR_chemtxs_CheB"/>
    <property type="match status" value="1"/>
</dbReference>
<dbReference type="SMART" id="SM00448">
    <property type="entry name" value="REC"/>
    <property type="match status" value="1"/>
</dbReference>
<dbReference type="SUPFAM" id="SSF52172">
    <property type="entry name" value="CheY-like"/>
    <property type="match status" value="1"/>
</dbReference>
<dbReference type="SUPFAM" id="SSF52738">
    <property type="entry name" value="Methylesterase CheB, C-terminal domain"/>
    <property type="match status" value="1"/>
</dbReference>
<dbReference type="PROSITE" id="PS50122">
    <property type="entry name" value="CHEB"/>
    <property type="match status" value="1"/>
</dbReference>
<dbReference type="PROSITE" id="PS50110">
    <property type="entry name" value="RESPONSE_REGULATORY"/>
    <property type="match status" value="1"/>
</dbReference>
<proteinExistence type="inferred from homology"/>
<keyword id="KW-0145">Chemotaxis</keyword>
<keyword id="KW-0963">Cytoplasm</keyword>
<keyword id="KW-0378">Hydrolase</keyword>
<keyword id="KW-0597">Phosphoprotein</keyword>
<keyword id="KW-1185">Reference proteome</keyword>
<protein>
    <recommendedName>
        <fullName evidence="1">Protein-glutamate methylesterase/protein-glutamine glutaminase 1</fullName>
        <ecNumber evidence="1">3.1.1.61</ecNumber>
        <ecNumber evidence="1">3.5.1.44</ecNumber>
    </recommendedName>
</protein>
<gene>
    <name evidence="1" type="primary">cheB1</name>
    <name type="ordered locus">XCC1866</name>
</gene>
<reference key="1">
    <citation type="journal article" date="2002" name="Nature">
        <title>Comparison of the genomes of two Xanthomonas pathogens with differing host specificities.</title>
        <authorList>
            <person name="da Silva A.C.R."/>
            <person name="Ferro J.A."/>
            <person name="Reinach F.C."/>
            <person name="Farah C.S."/>
            <person name="Furlan L.R."/>
            <person name="Quaggio R.B."/>
            <person name="Monteiro-Vitorello C.B."/>
            <person name="Van Sluys M.A."/>
            <person name="Almeida N.F. Jr."/>
            <person name="Alves L.M.C."/>
            <person name="do Amaral A.M."/>
            <person name="Bertolini M.C."/>
            <person name="Camargo L.E.A."/>
            <person name="Camarotte G."/>
            <person name="Cannavan F."/>
            <person name="Cardozo J."/>
            <person name="Chambergo F."/>
            <person name="Ciapina L.P."/>
            <person name="Cicarelli R.M.B."/>
            <person name="Coutinho L.L."/>
            <person name="Cursino-Santos J.R."/>
            <person name="El-Dorry H."/>
            <person name="Faria J.B."/>
            <person name="Ferreira A.J.S."/>
            <person name="Ferreira R.C.C."/>
            <person name="Ferro M.I.T."/>
            <person name="Formighieri E.F."/>
            <person name="Franco M.C."/>
            <person name="Greggio C.C."/>
            <person name="Gruber A."/>
            <person name="Katsuyama A.M."/>
            <person name="Kishi L.T."/>
            <person name="Leite R.P."/>
            <person name="Lemos E.G.M."/>
            <person name="Lemos M.V.F."/>
            <person name="Locali E.C."/>
            <person name="Machado M.A."/>
            <person name="Madeira A.M.B.N."/>
            <person name="Martinez-Rossi N.M."/>
            <person name="Martins E.C."/>
            <person name="Meidanis J."/>
            <person name="Menck C.F.M."/>
            <person name="Miyaki C.Y."/>
            <person name="Moon D.H."/>
            <person name="Moreira L.M."/>
            <person name="Novo M.T.M."/>
            <person name="Okura V.K."/>
            <person name="Oliveira M.C."/>
            <person name="Oliveira V.R."/>
            <person name="Pereira H.A."/>
            <person name="Rossi A."/>
            <person name="Sena J.A.D."/>
            <person name="Silva C."/>
            <person name="de Souza R.F."/>
            <person name="Spinola L.A.F."/>
            <person name="Takita M.A."/>
            <person name="Tamura R.E."/>
            <person name="Teixeira E.C."/>
            <person name="Tezza R.I.D."/>
            <person name="Trindade dos Santos M."/>
            <person name="Truffi D."/>
            <person name="Tsai S.M."/>
            <person name="White F.F."/>
            <person name="Setubal J.C."/>
            <person name="Kitajima J.P."/>
        </authorList>
    </citation>
    <scope>NUCLEOTIDE SEQUENCE [LARGE SCALE GENOMIC DNA]</scope>
    <source>
        <strain>ATCC 33913 / DSM 3586 / NCPPB 528 / LMG 568 / P 25</strain>
    </source>
</reference>
<sequence length="358" mass="38108">MTLETPVRVLIVDDSAVVRQMLTEILSRDPGIEVVGSAADPLLAREKIKRLNPDVITLDVEMPRMDGLVFLENLMRLRPTPVVMISSLTERGADTTLQALSLGAVDFISKPKIDVARGLEGYAEEIVSKVKMAAKAKVSALNRPSAPKITLDMQSAPVPGSALRFRTTDRLIAIGASAGGTEALRVVLEHMPADAPAVVMTQHLPASFSTAFAERLNRHSAMSVREASDGEAILPGHAYLPPGGQHLRIIRDGARWRCRIDDGPPVNRHKPAVDVLFRSVAANAGPNAVGAILTGMGDDGARGLLEMLQAGAPTLVQDEASSVVWGMPGAAYKLGAAQEVVPLERVAERLIALSAQAR</sequence>
<accession>Q8P9J7</accession>
<organism>
    <name type="scientific">Xanthomonas campestris pv. campestris (strain ATCC 33913 / DSM 3586 / NCPPB 528 / LMG 568 / P 25)</name>
    <dbReference type="NCBI Taxonomy" id="190485"/>
    <lineage>
        <taxon>Bacteria</taxon>
        <taxon>Pseudomonadati</taxon>
        <taxon>Pseudomonadota</taxon>
        <taxon>Gammaproteobacteria</taxon>
        <taxon>Lysobacterales</taxon>
        <taxon>Lysobacteraceae</taxon>
        <taxon>Xanthomonas</taxon>
    </lineage>
</organism>
<feature type="chain" id="PRO_0000158045" description="Protein-glutamate methylesterase/protein-glutamine glutaminase 1">
    <location>
        <begin position="1"/>
        <end position="358"/>
    </location>
</feature>
<feature type="domain" description="Response regulatory" evidence="1">
    <location>
        <begin position="8"/>
        <end position="125"/>
    </location>
</feature>
<feature type="domain" description="CheB-type methylesterase" evidence="1">
    <location>
        <begin position="157"/>
        <end position="352"/>
    </location>
</feature>
<feature type="active site" evidence="1">
    <location>
        <position position="177"/>
    </location>
</feature>
<feature type="active site" evidence="1">
    <location>
        <position position="203"/>
    </location>
</feature>
<feature type="active site" evidence="1">
    <location>
        <position position="299"/>
    </location>
</feature>
<feature type="modified residue" description="4-aspartylphosphate" evidence="1">
    <location>
        <position position="59"/>
    </location>
</feature>
<evidence type="ECO:0000255" key="1">
    <source>
        <dbReference type="HAMAP-Rule" id="MF_00099"/>
    </source>
</evidence>